<gene>
    <name evidence="1" type="primary">nsrR</name>
    <name type="ordered locus">EcE24377A_4737</name>
</gene>
<keyword id="KW-0001">2Fe-2S</keyword>
<keyword id="KW-0238">DNA-binding</keyword>
<keyword id="KW-0408">Iron</keyword>
<keyword id="KW-0411">Iron-sulfur</keyword>
<keyword id="KW-0479">Metal-binding</keyword>
<keyword id="KW-1185">Reference proteome</keyword>
<keyword id="KW-0678">Repressor</keyword>
<keyword id="KW-0804">Transcription</keyword>
<keyword id="KW-0805">Transcription regulation</keyword>
<accession>A7ZV48</accession>
<reference key="1">
    <citation type="journal article" date="2008" name="J. Bacteriol.">
        <title>The pangenome structure of Escherichia coli: comparative genomic analysis of E. coli commensal and pathogenic isolates.</title>
        <authorList>
            <person name="Rasko D.A."/>
            <person name="Rosovitz M.J."/>
            <person name="Myers G.S.A."/>
            <person name="Mongodin E.F."/>
            <person name="Fricke W.F."/>
            <person name="Gajer P."/>
            <person name="Crabtree J."/>
            <person name="Sebaihia M."/>
            <person name="Thomson N.R."/>
            <person name="Chaudhuri R."/>
            <person name="Henderson I.R."/>
            <person name="Sperandio V."/>
            <person name="Ravel J."/>
        </authorList>
    </citation>
    <scope>NUCLEOTIDE SEQUENCE [LARGE SCALE GENOMIC DNA]</scope>
    <source>
        <strain>E24377A / ETEC</strain>
    </source>
</reference>
<comment type="function">
    <text evidence="1">Nitric oxide-sensitive repressor of genes involved in protecting the cell against nitrosative stress. May require iron for activity.</text>
</comment>
<comment type="cofactor">
    <cofactor evidence="1">
        <name>[2Fe-2S] cluster</name>
        <dbReference type="ChEBI" id="CHEBI:190135"/>
    </cofactor>
    <text evidence="1">Binds 1 [2Fe-2S] cluster per subunit.</text>
</comment>
<evidence type="ECO:0000255" key="1">
    <source>
        <dbReference type="HAMAP-Rule" id="MF_01177"/>
    </source>
</evidence>
<organism>
    <name type="scientific">Escherichia coli O139:H28 (strain E24377A / ETEC)</name>
    <dbReference type="NCBI Taxonomy" id="331111"/>
    <lineage>
        <taxon>Bacteria</taxon>
        <taxon>Pseudomonadati</taxon>
        <taxon>Pseudomonadota</taxon>
        <taxon>Gammaproteobacteria</taxon>
        <taxon>Enterobacterales</taxon>
        <taxon>Enterobacteriaceae</taxon>
        <taxon>Escherichia</taxon>
    </lineage>
</organism>
<name>NSRR_ECO24</name>
<dbReference type="EMBL" id="CP000800">
    <property type="protein sequence ID" value="ABV17664.1"/>
    <property type="molecule type" value="Genomic_DNA"/>
</dbReference>
<dbReference type="RefSeq" id="WP_001177644.1">
    <property type="nucleotide sequence ID" value="NC_009801.1"/>
</dbReference>
<dbReference type="SMR" id="A7ZV48"/>
<dbReference type="GeneID" id="75202412"/>
<dbReference type="KEGG" id="ecw:EcE24377A_4737"/>
<dbReference type="HOGENOM" id="CLU_107144_2_1_6"/>
<dbReference type="Proteomes" id="UP000001122">
    <property type="component" value="Chromosome"/>
</dbReference>
<dbReference type="GO" id="GO:0005829">
    <property type="term" value="C:cytosol"/>
    <property type="evidence" value="ECO:0007669"/>
    <property type="project" value="TreeGrafter"/>
</dbReference>
<dbReference type="GO" id="GO:0051537">
    <property type="term" value="F:2 iron, 2 sulfur cluster binding"/>
    <property type="evidence" value="ECO:0007669"/>
    <property type="project" value="UniProtKB-KW"/>
</dbReference>
<dbReference type="GO" id="GO:0003700">
    <property type="term" value="F:DNA-binding transcription factor activity"/>
    <property type="evidence" value="ECO:0007669"/>
    <property type="project" value="UniProtKB-UniRule"/>
</dbReference>
<dbReference type="GO" id="GO:0003690">
    <property type="term" value="F:double-stranded DNA binding"/>
    <property type="evidence" value="ECO:0007669"/>
    <property type="project" value="UniProtKB-UniRule"/>
</dbReference>
<dbReference type="GO" id="GO:0005506">
    <property type="term" value="F:iron ion binding"/>
    <property type="evidence" value="ECO:0007669"/>
    <property type="project" value="UniProtKB-UniRule"/>
</dbReference>
<dbReference type="GO" id="GO:0045892">
    <property type="term" value="P:negative regulation of DNA-templated transcription"/>
    <property type="evidence" value="ECO:0007669"/>
    <property type="project" value="InterPro"/>
</dbReference>
<dbReference type="FunFam" id="1.10.10.10:FF:000105">
    <property type="entry name" value="HTH-type transcriptional repressor NsrR"/>
    <property type="match status" value="1"/>
</dbReference>
<dbReference type="Gene3D" id="1.10.10.10">
    <property type="entry name" value="Winged helix-like DNA-binding domain superfamily/Winged helix DNA-binding domain"/>
    <property type="match status" value="1"/>
</dbReference>
<dbReference type="HAMAP" id="MF_01177">
    <property type="entry name" value="HTH_type_NsrR"/>
    <property type="match status" value="1"/>
</dbReference>
<dbReference type="InterPro" id="IPR030489">
    <property type="entry name" value="TR_Rrf2-type_CS"/>
</dbReference>
<dbReference type="InterPro" id="IPR000944">
    <property type="entry name" value="Tscrpt_reg_Rrf2"/>
</dbReference>
<dbReference type="InterPro" id="IPR023761">
    <property type="entry name" value="Tscrpt_rep_HTH_NsrR"/>
</dbReference>
<dbReference type="InterPro" id="IPR036388">
    <property type="entry name" value="WH-like_DNA-bd_sf"/>
</dbReference>
<dbReference type="InterPro" id="IPR036390">
    <property type="entry name" value="WH_DNA-bd_sf"/>
</dbReference>
<dbReference type="NCBIfam" id="NF008240">
    <property type="entry name" value="PRK11014.1"/>
    <property type="match status" value="1"/>
</dbReference>
<dbReference type="NCBIfam" id="TIGR00738">
    <property type="entry name" value="rrf2_super"/>
    <property type="match status" value="1"/>
</dbReference>
<dbReference type="PANTHER" id="PTHR33221:SF4">
    <property type="entry name" value="HTH-TYPE TRANSCRIPTIONAL REPRESSOR NSRR"/>
    <property type="match status" value="1"/>
</dbReference>
<dbReference type="PANTHER" id="PTHR33221">
    <property type="entry name" value="WINGED HELIX-TURN-HELIX TRANSCRIPTIONAL REGULATOR, RRF2 FAMILY"/>
    <property type="match status" value="1"/>
</dbReference>
<dbReference type="Pfam" id="PF02082">
    <property type="entry name" value="Rrf2"/>
    <property type="match status" value="1"/>
</dbReference>
<dbReference type="SUPFAM" id="SSF46785">
    <property type="entry name" value="Winged helix' DNA-binding domain"/>
    <property type="match status" value="1"/>
</dbReference>
<dbReference type="PROSITE" id="PS01332">
    <property type="entry name" value="HTH_RRF2_1"/>
    <property type="match status" value="1"/>
</dbReference>
<dbReference type="PROSITE" id="PS51197">
    <property type="entry name" value="HTH_RRF2_2"/>
    <property type="match status" value="1"/>
</dbReference>
<feature type="chain" id="PRO_1000085430" description="HTH-type transcriptional repressor NsrR">
    <location>
        <begin position="1"/>
        <end position="141"/>
    </location>
</feature>
<feature type="domain" description="HTH rrf2-type" evidence="1">
    <location>
        <begin position="2"/>
        <end position="129"/>
    </location>
</feature>
<feature type="DNA-binding region" description="H-T-H motif" evidence="1">
    <location>
        <begin position="28"/>
        <end position="51"/>
    </location>
</feature>
<feature type="binding site" evidence="1">
    <location>
        <position position="91"/>
    </location>
    <ligand>
        <name>[2Fe-2S] cluster</name>
        <dbReference type="ChEBI" id="CHEBI:190135"/>
    </ligand>
</feature>
<feature type="binding site" evidence="1">
    <location>
        <position position="96"/>
    </location>
    <ligand>
        <name>[2Fe-2S] cluster</name>
        <dbReference type="ChEBI" id="CHEBI:190135"/>
    </ligand>
</feature>
<feature type="binding site" evidence="1">
    <location>
        <position position="102"/>
    </location>
    <ligand>
        <name>[2Fe-2S] cluster</name>
        <dbReference type="ChEBI" id="CHEBI:190135"/>
    </ligand>
</feature>
<protein>
    <recommendedName>
        <fullName evidence="1">HTH-type transcriptional repressor NsrR</fullName>
    </recommendedName>
</protein>
<proteinExistence type="inferred from homology"/>
<sequence length="141" mass="15583">MQLTSFTDYGLRALIYMASLPEGRMTSISEVTDVYGVSRNHMVKIINQLSRAGYVTAVRGKNGGIRLGKSASAIRIGDVVRELEPLSLVNCSSEFCHITPACRLKQALSKAVQSFLTELDNYTLADLVEENQPLYKLLLVE</sequence>